<evidence type="ECO:0007829" key="1">
    <source>
        <dbReference type="PDB" id="4JBU"/>
    </source>
</evidence>
<name>LCRV_YERPE</name>
<comment type="function">
    <text>Possibly involved in calcium regulation of YOP expression, which includes the export process.</text>
</comment>
<comment type="subcellular location">
    <subcellularLocation>
        <location>Secreted</location>
    </subcellularLocation>
</comment>
<accession>P0C7U7</accession>
<accession>O68697</accession>
<accession>P0C556</accession>
<accession>P21206</accession>
<accession>Q9L9Q7</accession>
<accession>Q9L9Q8</accession>
<dbReference type="EMBL" id="M26405">
    <property type="protein sequence ID" value="AAA27641.1"/>
    <property type="molecule type" value="Genomic_DNA"/>
</dbReference>
<dbReference type="EMBL" id="AF074612">
    <property type="protein sequence ID" value="AAC69799.1"/>
    <property type="molecule type" value="Genomic_DNA"/>
</dbReference>
<dbReference type="EMBL" id="AF053946">
    <property type="protein sequence ID" value="AAC62574.1"/>
    <property type="molecule type" value="Genomic_DNA"/>
</dbReference>
<dbReference type="EMBL" id="AL117189">
    <property type="protein sequence ID" value="CAB54908.1"/>
    <property type="molecule type" value="Genomic_DNA"/>
</dbReference>
<dbReference type="EMBL" id="AE017043">
    <property type="protein sequence ID" value="AAS58571.1"/>
    <property type="molecule type" value="Genomic_DNA"/>
</dbReference>
<dbReference type="PIR" id="B33601">
    <property type="entry name" value="B33601"/>
</dbReference>
<dbReference type="RefSeq" id="NP_395165.1">
    <property type="nucleotide sequence ID" value="NC_003131.1"/>
</dbReference>
<dbReference type="RefSeq" id="NP_857751.1">
    <property type="nucleotide sequence ID" value="NC_004836.1"/>
</dbReference>
<dbReference type="RefSeq" id="NP_857946.1">
    <property type="nucleotide sequence ID" value="NC_004839.1"/>
</dbReference>
<dbReference type="RefSeq" id="WP_002212981.1">
    <property type="nucleotide sequence ID" value="NZ_WUCM01000070.1"/>
</dbReference>
<dbReference type="PDB" id="1R6F">
    <property type="method" value="X-ray"/>
    <property type="resolution" value="2.17 A"/>
    <property type="chains" value="A=24-326"/>
</dbReference>
<dbReference type="PDB" id="4JBU">
    <property type="method" value="X-ray"/>
    <property type="resolution" value="1.65 A"/>
    <property type="chains" value="A=28-322"/>
</dbReference>
<dbReference type="PDBsum" id="1R6F"/>
<dbReference type="PDBsum" id="4JBU"/>
<dbReference type="SMR" id="P0C7U7"/>
<dbReference type="IntAct" id="P0C7U7">
    <property type="interactions" value="2"/>
</dbReference>
<dbReference type="PaxDb" id="214092-5832451"/>
<dbReference type="ABCD" id="P0C7U7">
    <property type="antibodies" value="13 sequenced antibodies"/>
</dbReference>
<dbReference type="EnsemblBacteria" id="AAS58571">
    <property type="protein sequence ID" value="AAS58571"/>
    <property type="gene ID" value="YP_pCD52"/>
</dbReference>
<dbReference type="KEGG" id="ype:YPCD1.31c"/>
<dbReference type="KEGG" id="ypm:YP_pCD52"/>
<dbReference type="PATRIC" id="fig|214092.21.peg.42"/>
<dbReference type="eggNOG" id="ENOG502ZVN5">
    <property type="taxonomic scope" value="Bacteria"/>
</dbReference>
<dbReference type="HOGENOM" id="CLU_946166_0_0_6"/>
<dbReference type="OMA" id="MEIRSYH"/>
<dbReference type="OrthoDB" id="6958673at2"/>
<dbReference type="EvolutionaryTrace" id="P0C7U7"/>
<dbReference type="PHI-base" id="PHI:7136"/>
<dbReference type="Proteomes" id="UP000000815">
    <property type="component" value="Plasmid pCD1"/>
</dbReference>
<dbReference type="Proteomes" id="UP000001019">
    <property type="component" value="Plasmid pCD1"/>
</dbReference>
<dbReference type="GO" id="GO:0005576">
    <property type="term" value="C:extracellular region"/>
    <property type="evidence" value="ECO:0007669"/>
    <property type="project" value="UniProtKB-SubCell"/>
</dbReference>
<dbReference type="InterPro" id="IPR005413">
    <property type="entry name" value="LowCa_resp_V_Ag"/>
</dbReference>
<dbReference type="InterPro" id="IPR036139">
    <property type="entry name" value="Vir_assoc_V_ag_sf"/>
</dbReference>
<dbReference type="Pfam" id="PF04792">
    <property type="entry name" value="LcrV"/>
    <property type="match status" value="1"/>
</dbReference>
<dbReference type="PRINTS" id="PR01592">
    <property type="entry name" value="LCRVANTIGEN"/>
</dbReference>
<dbReference type="SUPFAM" id="SSF103388">
    <property type="entry name" value="Virulence-associated V antigen"/>
    <property type="match status" value="1"/>
</dbReference>
<protein>
    <recommendedName>
        <fullName>Virulence-associated V antigen</fullName>
    </recommendedName>
    <alternativeName>
        <fullName>Low calcium response locus protein V</fullName>
    </alternativeName>
</protein>
<reference key="1">
    <citation type="journal article" date="1989" name="J. Bacteriol.">
        <title>Molecular analysis of lcrGVH, the V antigen operon of Yersinia pestis.</title>
        <authorList>
            <person name="Price S.B."/>
            <person name="Leung K.Y."/>
            <person name="Barve S.S."/>
            <person name="Straley S.C."/>
        </authorList>
    </citation>
    <scope>NUCLEOTIDE SEQUENCE [GENOMIC DNA]</scope>
    <source>
        <strain>KIM5 / Biovar Mediaevalis</strain>
    </source>
</reference>
<reference key="2">
    <citation type="journal article" date="1998" name="Infect. Immun.">
        <title>DNA sequencing and analysis of the low-Ca2+-response plasmid pCD1 of Yersinia pestis KIM5.</title>
        <authorList>
            <person name="Perry R.D."/>
            <person name="Straley S.C."/>
            <person name="Fetherston J.D."/>
            <person name="Rose D.J."/>
            <person name="Gregor J."/>
            <person name="Blattner F.R."/>
        </authorList>
    </citation>
    <scope>NUCLEOTIDE SEQUENCE [GENOMIC DNA]</scope>
    <source>
        <strain>KIM5 / Biovar Mediaevalis</strain>
    </source>
</reference>
<reference key="3">
    <citation type="journal article" date="1998" name="J. Bacteriol.">
        <title>Structural organization of virulence-associated plasmids of Yersinia pestis.</title>
        <authorList>
            <person name="Hu P."/>
            <person name="Elliott J."/>
            <person name="McCready P."/>
            <person name="Skowronski E."/>
            <person name="Garnes J."/>
            <person name="Kobayashi A."/>
            <person name="Brubaker R.R."/>
            <person name="Garcia E."/>
        </authorList>
    </citation>
    <scope>NUCLEOTIDE SEQUENCE [GENOMIC DNA]</scope>
    <source>
        <strain>KIM5 / Biovar Mediaevalis</strain>
    </source>
</reference>
<reference key="4">
    <citation type="journal article" date="2001" name="Nature">
        <title>Genome sequence of Yersinia pestis, the causative agent of plague.</title>
        <authorList>
            <person name="Parkhill J."/>
            <person name="Wren B.W."/>
            <person name="Thomson N.R."/>
            <person name="Titball R.W."/>
            <person name="Holden M.T.G."/>
            <person name="Prentice M.B."/>
            <person name="Sebaihia M."/>
            <person name="James K.D."/>
            <person name="Churcher C.M."/>
            <person name="Mungall K.L."/>
            <person name="Baker S."/>
            <person name="Basham D."/>
            <person name="Bentley S.D."/>
            <person name="Brooks K."/>
            <person name="Cerdeno-Tarraga A.-M."/>
            <person name="Chillingworth T."/>
            <person name="Cronin A."/>
            <person name="Davies R.M."/>
            <person name="Davis P."/>
            <person name="Dougan G."/>
            <person name="Feltwell T."/>
            <person name="Hamlin N."/>
            <person name="Holroyd S."/>
            <person name="Jagels K."/>
            <person name="Karlyshev A.V."/>
            <person name="Leather S."/>
            <person name="Moule S."/>
            <person name="Oyston P.C.F."/>
            <person name="Quail M.A."/>
            <person name="Rutherford K.M."/>
            <person name="Simmonds M."/>
            <person name="Skelton J."/>
            <person name="Stevens K."/>
            <person name="Whitehead S."/>
            <person name="Barrell B.G."/>
        </authorList>
    </citation>
    <scope>NUCLEOTIDE SEQUENCE [LARGE SCALE GENOMIC DNA]</scope>
    <source>
        <strain>CO-92 / Biovar Orientalis</strain>
    </source>
</reference>
<reference key="5">
    <citation type="journal article" date="2004" name="DNA Res.">
        <title>Complete genome sequence of Yersinia pestis strain 91001, an isolate avirulent to humans.</title>
        <authorList>
            <person name="Song Y."/>
            <person name="Tong Z."/>
            <person name="Wang J."/>
            <person name="Wang L."/>
            <person name="Guo Z."/>
            <person name="Han Y."/>
            <person name="Zhang J."/>
            <person name="Pei D."/>
            <person name="Zhou D."/>
            <person name="Qin H."/>
            <person name="Pang X."/>
            <person name="Han Y."/>
            <person name="Zhai J."/>
            <person name="Li M."/>
            <person name="Cui B."/>
            <person name="Qi Z."/>
            <person name="Jin L."/>
            <person name="Dai R."/>
            <person name="Chen F."/>
            <person name="Li S."/>
            <person name="Ye C."/>
            <person name="Du Z."/>
            <person name="Lin W."/>
            <person name="Wang J."/>
            <person name="Yu J."/>
            <person name="Yang H."/>
            <person name="Wang J."/>
            <person name="Huang P."/>
            <person name="Yang R."/>
        </authorList>
    </citation>
    <scope>NUCLEOTIDE SEQUENCE [LARGE SCALE GENOMIC DNA]</scope>
    <source>
        <strain>91001 / Biovar Mediaevalis</strain>
    </source>
</reference>
<feature type="chain" id="PRO_0000084380" description="Virulence-associated V antigen">
    <location>
        <begin position="1"/>
        <end position="326"/>
    </location>
</feature>
<feature type="sequence variant" description="In strain: 91001.">
    <original>SGK</original>
    <variation>R</variation>
    <location>
        <begin position="324"/>
        <end position="326"/>
    </location>
</feature>
<feature type="helix" evidence="1">
    <location>
        <begin position="31"/>
        <end position="41"/>
    </location>
</feature>
<feature type="strand" evidence="1">
    <location>
        <begin position="45"/>
        <end position="48"/>
    </location>
</feature>
<feature type="turn" evidence="1">
    <location>
        <begin position="52"/>
        <end position="54"/>
    </location>
</feature>
<feature type="helix" evidence="1">
    <location>
        <begin position="64"/>
        <end position="66"/>
    </location>
</feature>
<feature type="helix" evidence="1">
    <location>
        <begin position="68"/>
        <end position="78"/>
    </location>
</feature>
<feature type="helix" evidence="1">
    <location>
        <begin position="81"/>
        <end position="85"/>
    </location>
</feature>
<feature type="helix" evidence="1">
    <location>
        <begin position="92"/>
        <end position="107"/>
    </location>
</feature>
<feature type="strand" evidence="1">
    <location>
        <begin position="112"/>
        <end position="114"/>
    </location>
</feature>
<feature type="helix" evidence="1">
    <location>
        <begin position="115"/>
        <end position="126"/>
    </location>
</feature>
<feature type="helix" evidence="1">
    <location>
        <begin position="133"/>
        <end position="144"/>
    </location>
</feature>
<feature type="helix" evidence="1">
    <location>
        <begin position="149"/>
        <end position="179"/>
    </location>
</feature>
<feature type="strand" evidence="1">
    <location>
        <begin position="183"/>
        <end position="185"/>
    </location>
</feature>
<feature type="helix" evidence="1">
    <location>
        <begin position="196"/>
        <end position="199"/>
    </location>
</feature>
<feature type="helix" evidence="1">
    <location>
        <begin position="204"/>
        <end position="208"/>
    </location>
</feature>
<feature type="helix" evidence="1">
    <location>
        <begin position="211"/>
        <end position="216"/>
    </location>
</feature>
<feature type="strand" evidence="1">
    <location>
        <begin position="222"/>
        <end position="226"/>
    </location>
</feature>
<feature type="strand" evidence="1">
    <location>
        <begin position="229"/>
        <end position="233"/>
    </location>
</feature>
<feature type="helix" evidence="1">
    <location>
        <begin position="236"/>
        <end position="240"/>
    </location>
</feature>
<feature type="strand" evidence="1">
    <location>
        <begin position="243"/>
        <end position="245"/>
    </location>
</feature>
<feature type="strand" evidence="1">
    <location>
        <begin position="255"/>
        <end position="258"/>
    </location>
</feature>
<feature type="helix" evidence="1">
    <location>
        <begin position="281"/>
        <end position="318"/>
    </location>
</feature>
<gene>
    <name type="primary">lcrV</name>
    <name type="synonym">icrV</name>
    <name type="ordered locus">YPCD1.31c</name>
    <name type="ordered locus">y5047</name>
    <name type="ordered locus">y0050</name>
    <name type="ordered locus">YP_pCD52</name>
</gene>
<sequence>MIRAYEQNPQHFIEDLEKVRVEQLTGHGSSVLEELVQLVKDKNIDISIKYDPRKDSEVFANRVITDDIELLKKILAYFLPEDAILKGGHYDNQLQNGIKRVKEFLESSPNTQWELRAFMAVMHFSLTADRIDDDILKVIVDSMNHHGDARSKLREELAELTAELKIYSVIQAEINKHLSSSGTINIHDKSINLMDKNLYGYTDEEIFKASAEYKILEKMPQTTIQVDGSEKKIVSIKDFLGSENKRTGALGNLKNSYSYNKDNNELSHFATTCSDKSRPLNDLVSQKTTQLSDITSRFNSAIEALNRFIQKYDSVMQRLLDDTSGK</sequence>
<keyword id="KW-0002">3D-structure</keyword>
<keyword id="KW-0614">Plasmid</keyword>
<keyword id="KW-1185">Reference proteome</keyword>
<keyword id="KW-0964">Secreted</keyword>
<keyword id="KW-0843">Virulence</keyword>
<proteinExistence type="evidence at protein level"/>
<organism>
    <name type="scientific">Yersinia pestis</name>
    <dbReference type="NCBI Taxonomy" id="632"/>
    <lineage>
        <taxon>Bacteria</taxon>
        <taxon>Pseudomonadati</taxon>
        <taxon>Pseudomonadota</taxon>
        <taxon>Gammaproteobacteria</taxon>
        <taxon>Enterobacterales</taxon>
        <taxon>Yersiniaceae</taxon>
        <taxon>Yersinia</taxon>
    </lineage>
</organism>
<geneLocation type="plasmid">
    <name>pCD1</name>
</geneLocation>